<gene>
    <name type="ordered locus">YNL046W</name>
    <name type="ORF">N2530</name>
</gene>
<comment type="subcellular location">
    <subcellularLocation>
        <location evidence="2">Endoplasmic reticulum membrane</location>
        <topology evidence="2">Multi-pass membrane protein</topology>
    </subcellularLocation>
</comment>
<comment type="miscellaneous">
    <text evidence="3">Present with 704 molecules/cell in log phase SD medium.</text>
</comment>
<protein>
    <recommendedName>
        <fullName>Uncharacterized endoplasmic reticulum membrane protein YNL046W</fullName>
    </recommendedName>
</protein>
<keyword id="KW-0256">Endoplasmic reticulum</keyword>
<keyword id="KW-0472">Membrane</keyword>
<keyword id="KW-1185">Reference proteome</keyword>
<keyword id="KW-0812">Transmembrane</keyword>
<keyword id="KW-1133">Transmembrane helix</keyword>
<organism>
    <name type="scientific">Saccharomyces cerevisiae (strain ATCC 204508 / S288c)</name>
    <name type="common">Baker's yeast</name>
    <dbReference type="NCBI Taxonomy" id="559292"/>
    <lineage>
        <taxon>Eukaryota</taxon>
        <taxon>Fungi</taxon>
        <taxon>Dikarya</taxon>
        <taxon>Ascomycota</taxon>
        <taxon>Saccharomycotina</taxon>
        <taxon>Saccharomycetes</taxon>
        <taxon>Saccharomycetales</taxon>
        <taxon>Saccharomycetaceae</taxon>
        <taxon>Saccharomyces</taxon>
    </lineage>
</organism>
<name>YNE6_YEAST</name>
<reference key="1">
    <citation type="journal article" date="1996" name="Yeast">
        <title>The sequence of 12.8 kb from the left arm of chromosome XIV reveals a sigma element, a pro-tRNA and six complete open reading frames, one of which encodes a protein similar to the human leukotriene A4 hydrolase.</title>
        <authorList>
            <person name="Nasr F."/>
            <person name="Becam A.-M."/>
            <person name="Herbert C.J."/>
        </authorList>
    </citation>
    <scope>NUCLEOTIDE SEQUENCE [GENOMIC DNA]</scope>
    <source>
        <strain>ATCC 96604 / S288c / FY1679</strain>
    </source>
</reference>
<reference key="2">
    <citation type="journal article" date="1997" name="Nature">
        <title>The nucleotide sequence of Saccharomyces cerevisiae chromosome XIV and its evolutionary implications.</title>
        <authorList>
            <person name="Philippsen P."/>
            <person name="Kleine K."/>
            <person name="Poehlmann R."/>
            <person name="Duesterhoeft A."/>
            <person name="Hamberg K."/>
            <person name="Hegemann J.H."/>
            <person name="Obermaier B."/>
            <person name="Urrestarazu L.A."/>
            <person name="Aert R."/>
            <person name="Albermann K."/>
            <person name="Altmann R."/>
            <person name="Andre B."/>
            <person name="Baladron V."/>
            <person name="Ballesta J.P.G."/>
            <person name="Becam A.-M."/>
            <person name="Beinhauer J.D."/>
            <person name="Boskovic J."/>
            <person name="Buitrago M.J."/>
            <person name="Bussereau F."/>
            <person name="Coster F."/>
            <person name="Crouzet M."/>
            <person name="D'Angelo M."/>
            <person name="Dal Pero F."/>
            <person name="De Antoni A."/>
            <person name="del Rey F."/>
            <person name="Doignon F."/>
            <person name="Domdey H."/>
            <person name="Dubois E."/>
            <person name="Fiedler T.A."/>
            <person name="Fleig U."/>
            <person name="Floeth M."/>
            <person name="Fritz C."/>
            <person name="Gaillardin C."/>
            <person name="Garcia-Cantalejo J.M."/>
            <person name="Glansdorff N."/>
            <person name="Goffeau A."/>
            <person name="Gueldener U."/>
            <person name="Herbert C.J."/>
            <person name="Heumann K."/>
            <person name="Heuss-Neitzel D."/>
            <person name="Hilbert H."/>
            <person name="Hinni K."/>
            <person name="Iraqui Houssaini I."/>
            <person name="Jacquet M."/>
            <person name="Jimenez A."/>
            <person name="Jonniaux J.-L."/>
            <person name="Karpfinger-Hartl L."/>
            <person name="Lanfranchi G."/>
            <person name="Lepingle A."/>
            <person name="Levesque H."/>
            <person name="Lyck R."/>
            <person name="Maftahi M."/>
            <person name="Mallet L."/>
            <person name="Maurer C.T.C."/>
            <person name="Messenguy F."/>
            <person name="Mewes H.-W."/>
            <person name="Moestl D."/>
            <person name="Nasr F."/>
            <person name="Nicaud J.-M."/>
            <person name="Niedenthal R.K."/>
            <person name="Pandolfo D."/>
            <person name="Pierard A."/>
            <person name="Piravandi E."/>
            <person name="Planta R.J."/>
            <person name="Pohl T.M."/>
            <person name="Purnelle B."/>
            <person name="Rebischung C."/>
            <person name="Remacha M.A."/>
            <person name="Revuelta J.L."/>
            <person name="Rinke M."/>
            <person name="Saiz J.E."/>
            <person name="Sartorello F."/>
            <person name="Scherens B."/>
            <person name="Sen-Gupta M."/>
            <person name="Soler-Mira A."/>
            <person name="Urbanus J.H.M."/>
            <person name="Valle G."/>
            <person name="Van Dyck L."/>
            <person name="Verhasselt P."/>
            <person name="Vierendeels F."/>
            <person name="Vissers S."/>
            <person name="Voet M."/>
            <person name="Volckaert G."/>
            <person name="Wach A."/>
            <person name="Wambutt R."/>
            <person name="Wedler H."/>
            <person name="Zollner A."/>
            <person name="Hani J."/>
        </authorList>
    </citation>
    <scope>NUCLEOTIDE SEQUENCE [LARGE SCALE GENOMIC DNA]</scope>
    <source>
        <strain>ATCC 204508 / S288c</strain>
    </source>
</reference>
<reference key="3">
    <citation type="journal article" date="2014" name="G3 (Bethesda)">
        <title>The reference genome sequence of Saccharomyces cerevisiae: Then and now.</title>
        <authorList>
            <person name="Engel S.R."/>
            <person name="Dietrich F.S."/>
            <person name="Fisk D.G."/>
            <person name="Binkley G."/>
            <person name="Balakrishnan R."/>
            <person name="Costanzo M.C."/>
            <person name="Dwight S.S."/>
            <person name="Hitz B.C."/>
            <person name="Karra K."/>
            <person name="Nash R.S."/>
            <person name="Weng S."/>
            <person name="Wong E.D."/>
            <person name="Lloyd P."/>
            <person name="Skrzypek M.S."/>
            <person name="Miyasato S.R."/>
            <person name="Simison M."/>
            <person name="Cherry J.M."/>
        </authorList>
    </citation>
    <scope>GENOME REANNOTATION</scope>
    <source>
        <strain>ATCC 204508 / S288c</strain>
    </source>
</reference>
<reference key="4">
    <citation type="journal article" date="2003" name="Nature">
        <title>Global analysis of protein localization in budding yeast.</title>
        <authorList>
            <person name="Huh W.-K."/>
            <person name="Falvo J.V."/>
            <person name="Gerke L.C."/>
            <person name="Carroll A.S."/>
            <person name="Howson R.W."/>
            <person name="Weissman J.S."/>
            <person name="O'Shea E.K."/>
        </authorList>
    </citation>
    <scope>SUBCELLULAR LOCATION [LARGE SCALE ANALYSIS]</scope>
</reference>
<reference key="5">
    <citation type="journal article" date="2003" name="Nature">
        <title>Global analysis of protein expression in yeast.</title>
        <authorList>
            <person name="Ghaemmaghami S."/>
            <person name="Huh W.-K."/>
            <person name="Bower K."/>
            <person name="Howson R.W."/>
            <person name="Belle A."/>
            <person name="Dephoure N."/>
            <person name="O'Shea E.K."/>
            <person name="Weissman J.S."/>
        </authorList>
    </citation>
    <scope>LEVEL OF PROTEIN EXPRESSION [LARGE SCALE ANALYSIS]</scope>
</reference>
<reference key="6">
    <citation type="journal article" date="2006" name="Proc. Natl. Acad. Sci. U.S.A.">
        <title>A global topology map of the Saccharomyces cerevisiae membrane proteome.</title>
        <authorList>
            <person name="Kim H."/>
            <person name="Melen K."/>
            <person name="Oesterberg M."/>
            <person name="von Heijne G."/>
        </authorList>
    </citation>
    <scope>TOPOLOGY [LARGE SCALE ANALYSIS]</scope>
    <source>
        <strain>ATCC 208353 / W303-1A</strain>
    </source>
</reference>
<accession>P53956</accession>
<accession>D6W1D3</accession>
<sequence>MEHVSKRSIGQFFKRKTSTVDGSKSQKCGTTNQLRKLLHKRRVQKQAVPVESQYRIPGDFRDNQSVRVKNSMYNSSPSVTPSTHHINERYVRYDINTRPLVVVLAISIVFFGCLLVLKDIIIQSSENILSVSKWKIIGASFMGTPYTGLLTGLVGPLLSPFSAVSSWLSFIF</sequence>
<dbReference type="EMBL" id="X94547">
    <property type="protein sequence ID" value="CAA64236.1"/>
    <property type="molecule type" value="Genomic_DNA"/>
</dbReference>
<dbReference type="EMBL" id="Z71322">
    <property type="protein sequence ID" value="CAA95914.1"/>
    <property type="molecule type" value="Genomic_DNA"/>
</dbReference>
<dbReference type="EMBL" id="BK006947">
    <property type="protein sequence ID" value="DAA10499.1"/>
    <property type="molecule type" value="Genomic_DNA"/>
</dbReference>
<dbReference type="PIR" id="S61098">
    <property type="entry name" value="S61098"/>
</dbReference>
<dbReference type="RefSeq" id="NP_014352.3">
    <property type="nucleotide sequence ID" value="NM_001182885.3"/>
</dbReference>
<dbReference type="BioGRID" id="35778">
    <property type="interactions" value="90"/>
</dbReference>
<dbReference type="DIP" id="DIP-4544N"/>
<dbReference type="FunCoup" id="P53956">
    <property type="interactions" value="32"/>
</dbReference>
<dbReference type="IntAct" id="P53956">
    <property type="interactions" value="1"/>
</dbReference>
<dbReference type="STRING" id="4932.YNL046W"/>
<dbReference type="GlyGen" id="P53956">
    <property type="glycosylation" value="1 site"/>
</dbReference>
<dbReference type="PaxDb" id="4932-YNL046W"/>
<dbReference type="PeptideAtlas" id="P53956"/>
<dbReference type="EnsemblFungi" id="YNL046W_mRNA">
    <property type="protein sequence ID" value="YNL046W"/>
    <property type="gene ID" value="YNL046W"/>
</dbReference>
<dbReference type="GeneID" id="855681"/>
<dbReference type="KEGG" id="sce:YNL046W"/>
<dbReference type="AGR" id="SGD:S000004991"/>
<dbReference type="SGD" id="S000004991">
    <property type="gene designation" value="YNL046W"/>
</dbReference>
<dbReference type="VEuPathDB" id="FungiDB:YNL046W"/>
<dbReference type="HOGENOM" id="CLU_1556490_0_0_1"/>
<dbReference type="InParanoid" id="P53956"/>
<dbReference type="OMA" id="QXVPVES"/>
<dbReference type="OrthoDB" id="4043816at2759"/>
<dbReference type="BioCyc" id="YEAST:G3O-33080-MONOMER"/>
<dbReference type="BioGRID-ORCS" id="855681">
    <property type="hits" value="4 hits in 10 CRISPR screens"/>
</dbReference>
<dbReference type="PRO" id="PR:P53956"/>
<dbReference type="Proteomes" id="UP000002311">
    <property type="component" value="Chromosome XIV"/>
</dbReference>
<dbReference type="RNAct" id="P53956">
    <property type="molecule type" value="protein"/>
</dbReference>
<dbReference type="GO" id="GO:0005783">
    <property type="term" value="C:endoplasmic reticulum"/>
    <property type="evidence" value="ECO:0007005"/>
    <property type="project" value="SGD"/>
</dbReference>
<dbReference type="GO" id="GO:0005789">
    <property type="term" value="C:endoplasmic reticulum membrane"/>
    <property type="evidence" value="ECO:0007669"/>
    <property type="project" value="UniProtKB-SubCell"/>
</dbReference>
<dbReference type="GO" id="GO:0005634">
    <property type="term" value="C:nucleus"/>
    <property type="evidence" value="ECO:0007005"/>
    <property type="project" value="SGD"/>
</dbReference>
<evidence type="ECO:0000255" key="1"/>
<evidence type="ECO:0000269" key="2">
    <source>
    </source>
</evidence>
<evidence type="ECO:0000269" key="3">
    <source>
    </source>
</evidence>
<proteinExistence type="evidence at protein level"/>
<feature type="chain" id="PRO_0000203454" description="Uncharacterized endoplasmic reticulum membrane protein YNL046W">
    <location>
        <begin position="1"/>
        <end position="172"/>
    </location>
</feature>
<feature type="topological domain" description="Lumenal" evidence="1">
    <location>
        <begin position="1"/>
        <end position="101"/>
    </location>
</feature>
<feature type="transmembrane region" description="Helical" evidence="1">
    <location>
        <begin position="102"/>
        <end position="122"/>
    </location>
</feature>
<feature type="topological domain" description="Cytoplasmic" evidence="1">
    <location>
        <begin position="123"/>
        <end position="145"/>
    </location>
</feature>
<feature type="transmembrane region" description="Helical" evidence="1">
    <location>
        <begin position="146"/>
        <end position="164"/>
    </location>
</feature>
<feature type="topological domain" description="Lumenal" evidence="1">
    <location>
        <begin position="165"/>
        <end position="172"/>
    </location>
</feature>